<proteinExistence type="inferred from homology"/>
<feature type="chain" id="PRO_1000114258" description="Cell division topological specificity factor">
    <location>
        <begin position="1"/>
        <end position="89"/>
    </location>
</feature>
<evidence type="ECO:0000255" key="1">
    <source>
        <dbReference type="HAMAP-Rule" id="MF_00262"/>
    </source>
</evidence>
<sequence length="89" mass="10332">MALLDFFLSRKKPTANIAKERLQIIVAERRRGDSEPHYLPDLKRDILAVICKYIQIDPEMLHVQFEQKGDDISVLELNVTLPETEETPK</sequence>
<keyword id="KW-0131">Cell cycle</keyword>
<keyword id="KW-0132">Cell division</keyword>
<gene>
    <name evidence="1" type="primary">minE</name>
    <name type="ordered locus">YPK_2123</name>
</gene>
<reference key="1">
    <citation type="submission" date="2008-02" db="EMBL/GenBank/DDBJ databases">
        <title>Complete sequence of Yersinia pseudotuberculosis YPIII.</title>
        <authorList>
            <consortium name="US DOE Joint Genome Institute"/>
            <person name="Copeland A."/>
            <person name="Lucas S."/>
            <person name="Lapidus A."/>
            <person name="Glavina del Rio T."/>
            <person name="Dalin E."/>
            <person name="Tice H."/>
            <person name="Bruce D."/>
            <person name="Goodwin L."/>
            <person name="Pitluck S."/>
            <person name="Munk A.C."/>
            <person name="Brettin T."/>
            <person name="Detter J.C."/>
            <person name="Han C."/>
            <person name="Tapia R."/>
            <person name="Schmutz J."/>
            <person name="Larimer F."/>
            <person name="Land M."/>
            <person name="Hauser L."/>
            <person name="Challacombe J.F."/>
            <person name="Green L."/>
            <person name="Lindler L.E."/>
            <person name="Nikolich M.P."/>
            <person name="Richardson P."/>
        </authorList>
    </citation>
    <scope>NUCLEOTIDE SEQUENCE [LARGE SCALE GENOMIC DNA]</scope>
    <source>
        <strain>YPIII</strain>
    </source>
</reference>
<accession>B1JLJ0</accession>
<name>MINE_YERPY</name>
<protein>
    <recommendedName>
        <fullName evidence="1">Cell division topological specificity factor</fullName>
    </recommendedName>
</protein>
<comment type="function">
    <text evidence="1">Prevents the cell division inhibition by proteins MinC and MinD at internal division sites while permitting inhibition at polar sites. This ensures cell division at the proper site by restricting the formation of a division septum at the midpoint of the long axis of the cell.</text>
</comment>
<comment type="similarity">
    <text evidence="1">Belongs to the MinE family.</text>
</comment>
<dbReference type="EMBL" id="CP000950">
    <property type="protein sequence ID" value="ACA68409.1"/>
    <property type="molecule type" value="Genomic_DNA"/>
</dbReference>
<dbReference type="RefSeq" id="WP_002211180.1">
    <property type="nucleotide sequence ID" value="NZ_CP009792.1"/>
</dbReference>
<dbReference type="SMR" id="B1JLJ0"/>
<dbReference type="GeneID" id="97456410"/>
<dbReference type="KEGG" id="ypy:YPK_2123"/>
<dbReference type="PATRIC" id="fig|502800.11.peg.2797"/>
<dbReference type="GO" id="GO:0051301">
    <property type="term" value="P:cell division"/>
    <property type="evidence" value="ECO:0007669"/>
    <property type="project" value="UniProtKB-KW"/>
</dbReference>
<dbReference type="GO" id="GO:0032955">
    <property type="term" value="P:regulation of division septum assembly"/>
    <property type="evidence" value="ECO:0007669"/>
    <property type="project" value="InterPro"/>
</dbReference>
<dbReference type="FunFam" id="3.30.1070.10:FF:000001">
    <property type="entry name" value="Cell division topological specificity factor"/>
    <property type="match status" value="1"/>
</dbReference>
<dbReference type="Gene3D" id="3.30.1070.10">
    <property type="entry name" value="Cell division topological specificity factor MinE"/>
    <property type="match status" value="1"/>
</dbReference>
<dbReference type="HAMAP" id="MF_00262">
    <property type="entry name" value="MinE"/>
    <property type="match status" value="1"/>
</dbReference>
<dbReference type="InterPro" id="IPR005527">
    <property type="entry name" value="MinE"/>
</dbReference>
<dbReference type="InterPro" id="IPR036707">
    <property type="entry name" value="MinE_sf"/>
</dbReference>
<dbReference type="NCBIfam" id="TIGR01215">
    <property type="entry name" value="minE"/>
    <property type="match status" value="1"/>
</dbReference>
<dbReference type="NCBIfam" id="NF001422">
    <property type="entry name" value="PRK00296.1"/>
    <property type="match status" value="1"/>
</dbReference>
<dbReference type="Pfam" id="PF03776">
    <property type="entry name" value="MinE"/>
    <property type="match status" value="1"/>
</dbReference>
<dbReference type="SUPFAM" id="SSF55229">
    <property type="entry name" value="Cell division protein MinE topological specificity domain"/>
    <property type="match status" value="1"/>
</dbReference>
<organism>
    <name type="scientific">Yersinia pseudotuberculosis serotype O:3 (strain YPIII)</name>
    <dbReference type="NCBI Taxonomy" id="502800"/>
    <lineage>
        <taxon>Bacteria</taxon>
        <taxon>Pseudomonadati</taxon>
        <taxon>Pseudomonadota</taxon>
        <taxon>Gammaproteobacteria</taxon>
        <taxon>Enterobacterales</taxon>
        <taxon>Yersiniaceae</taxon>
        <taxon>Yersinia</taxon>
    </lineage>
</organism>